<reference key="1">
    <citation type="journal article" date="2006" name="Nature">
        <title>DNA sequence and analysis of human chromosome 8.</title>
        <authorList>
            <person name="Nusbaum C."/>
            <person name="Mikkelsen T.S."/>
            <person name="Zody M.C."/>
            <person name="Asakawa S."/>
            <person name="Taudien S."/>
            <person name="Garber M."/>
            <person name="Kodira C.D."/>
            <person name="Schueler M.G."/>
            <person name="Shimizu A."/>
            <person name="Whittaker C.A."/>
            <person name="Chang J.L."/>
            <person name="Cuomo C.A."/>
            <person name="Dewar K."/>
            <person name="FitzGerald M.G."/>
            <person name="Yang X."/>
            <person name="Allen N.R."/>
            <person name="Anderson S."/>
            <person name="Asakawa T."/>
            <person name="Blechschmidt K."/>
            <person name="Bloom T."/>
            <person name="Borowsky M.L."/>
            <person name="Butler J."/>
            <person name="Cook A."/>
            <person name="Corum B."/>
            <person name="DeArellano K."/>
            <person name="DeCaprio D."/>
            <person name="Dooley K.T."/>
            <person name="Dorris L. III"/>
            <person name="Engels R."/>
            <person name="Gloeckner G."/>
            <person name="Hafez N."/>
            <person name="Hagopian D.S."/>
            <person name="Hall J.L."/>
            <person name="Ishikawa S.K."/>
            <person name="Jaffe D.B."/>
            <person name="Kamat A."/>
            <person name="Kudoh J."/>
            <person name="Lehmann R."/>
            <person name="Lokitsang T."/>
            <person name="Macdonald P."/>
            <person name="Major J.E."/>
            <person name="Matthews C.D."/>
            <person name="Mauceli E."/>
            <person name="Menzel U."/>
            <person name="Mihalev A.H."/>
            <person name="Minoshima S."/>
            <person name="Murayama Y."/>
            <person name="Naylor J.W."/>
            <person name="Nicol R."/>
            <person name="Nguyen C."/>
            <person name="O'Leary S.B."/>
            <person name="O'Neill K."/>
            <person name="Parker S.C.J."/>
            <person name="Polley A."/>
            <person name="Raymond C.K."/>
            <person name="Reichwald K."/>
            <person name="Rodriguez J."/>
            <person name="Sasaki T."/>
            <person name="Schilhabel M."/>
            <person name="Siddiqui R."/>
            <person name="Smith C.L."/>
            <person name="Sneddon T.P."/>
            <person name="Talamas J.A."/>
            <person name="Tenzin P."/>
            <person name="Topham K."/>
            <person name="Venkataraman V."/>
            <person name="Wen G."/>
            <person name="Yamazaki S."/>
            <person name="Young S.K."/>
            <person name="Zeng Q."/>
            <person name="Zimmer A.R."/>
            <person name="Rosenthal A."/>
            <person name="Birren B.W."/>
            <person name="Platzer M."/>
            <person name="Shimizu N."/>
            <person name="Lander E.S."/>
        </authorList>
    </citation>
    <scope>NUCLEOTIDE SEQUENCE [LARGE SCALE GENOMIC DNA]</scope>
</reference>
<reference key="2">
    <citation type="journal article" date="2004" name="Nat. Biotechnol.">
        <title>Transcriptome characterization elucidates signaling networks that control human ES cell growth and differentiation.</title>
        <authorList>
            <person name="Brandenberger R."/>
            <person name="Wei H."/>
            <person name="Zhang S."/>
            <person name="Lei S."/>
            <person name="Murage J."/>
            <person name="Fisk G.J."/>
            <person name="Li Y."/>
            <person name="Xu C."/>
            <person name="Fang R."/>
            <person name="Guegler K."/>
            <person name="Rao M.S."/>
            <person name="Mandalam R."/>
            <person name="Lebkowski J."/>
            <person name="Stanton L.W."/>
        </authorList>
    </citation>
    <scope>NUCLEOTIDE SEQUENCE [MRNA] OF 64-214</scope>
</reference>
<reference key="3">
    <citation type="journal article" date="2005" name="Hum. Mol. Genet.">
        <title>Common arterial trunk associated with a homeodomain mutation of NKX2.6.</title>
        <authorList>
            <person name="Heathcote K."/>
            <person name="Braybrook C."/>
            <person name="Abushaban L."/>
            <person name="Guy M."/>
            <person name="Khetyar M.E."/>
            <person name="Patton M.A."/>
            <person name="Carter N.D."/>
            <person name="Scambler P.J."/>
            <person name="Syrris P."/>
        </authorList>
    </citation>
    <scope>VARIANT CTHM LEU-151</scope>
    <scope>FUNCTION</scope>
    <scope>CHARACTERIZATION OF VARIANT CTHM LEU-151</scope>
    <scope>INVOLVEMENT IN CTHM</scope>
</reference>
<reference key="4">
    <citation type="journal article" date="2014" name="Eur. J. Med. Genet.">
        <title>Prevalence and spectrum of Nkx2.6 mutations in patients with congenital heart disease.</title>
        <authorList>
            <person name="Zhao L."/>
            <person name="Ni S.H."/>
            <person name="Liu X.Y."/>
            <person name="Wei D."/>
            <person name="Yuan F."/>
            <person name="Xu L."/>
            <person name="Xin L."/>
            <person name="Li R.G."/>
            <person name="Qu X.K."/>
            <person name="Xu Y.J."/>
            <person name="Fang W.Y."/>
            <person name="Yang Y.Q."/>
            <person name="Qiu X.B."/>
        </authorList>
    </citation>
    <scope>VARIANT CTHM ALA-176</scope>
</reference>
<reference key="5">
    <citation type="journal article" date="2014" name="J. Med. Genet.">
        <title>Conotruncal malformations and absent thymus due to a deleterious NKX2-6 mutation.</title>
        <authorList>
            <person name="Ta-Shma A."/>
            <person name="El-lahham N."/>
            <person name="Edvardson S."/>
            <person name="Stepensky P."/>
            <person name="Nir A."/>
            <person name="Perles Z."/>
            <person name="Gavri S."/>
            <person name="Golender J."/>
            <person name="Yaakobi-Simhayoff N."/>
            <person name="Shaag A."/>
            <person name="Rein A.J."/>
            <person name="Elpeleg O."/>
        </authorList>
    </citation>
    <scope>INVOLVEMENT IN CTHM</scope>
</reference>
<reference key="6">
    <citation type="journal article" date="2015" name="Pediatr. Cardiol.">
        <title>A novel NKX2.6 mutation associated with congenital ventricular septal defect.</title>
        <authorList>
            <person name="Wang J."/>
            <person name="Mao J.H."/>
            <person name="Ding K.K."/>
            <person name="Xu W.J."/>
            <person name="Liu X.Y."/>
            <person name="Qiu X.B."/>
            <person name="Li R.G."/>
            <person name="Qu X.K."/>
            <person name="Xu Y.J."/>
            <person name="Huang R.T."/>
            <person name="Xue S."/>
            <person name="Yang Y.Q."/>
        </authorList>
    </citation>
    <scope>VARIANT CTHM GLN-152</scope>
</reference>
<organism>
    <name type="scientific">Homo sapiens</name>
    <name type="common">Human</name>
    <dbReference type="NCBI Taxonomy" id="9606"/>
    <lineage>
        <taxon>Eukaryota</taxon>
        <taxon>Metazoa</taxon>
        <taxon>Chordata</taxon>
        <taxon>Craniata</taxon>
        <taxon>Vertebrata</taxon>
        <taxon>Euteleostomi</taxon>
        <taxon>Mammalia</taxon>
        <taxon>Eutheria</taxon>
        <taxon>Euarchontoglires</taxon>
        <taxon>Primates</taxon>
        <taxon>Haplorrhini</taxon>
        <taxon>Catarrhini</taxon>
        <taxon>Hominidae</taxon>
        <taxon>Homo</taxon>
    </lineage>
</organism>
<gene>
    <name type="primary">NKX2-6</name>
    <name type="synonym">NKX2F</name>
</gene>
<dbReference type="EMBL" id="AC012574">
    <property type="status" value="NOT_ANNOTATED_CDS"/>
    <property type="molecule type" value="Genomic_DNA"/>
</dbReference>
<dbReference type="EMBL" id="CN272646">
    <property type="status" value="NOT_ANNOTATED_CDS"/>
    <property type="molecule type" value="mRNA"/>
</dbReference>
<dbReference type="RefSeq" id="NP_001129743.2">
    <property type="nucleotide sequence ID" value="NM_001136271.3"/>
</dbReference>
<dbReference type="SMR" id="A6NCS4"/>
<dbReference type="BioGRID" id="126485">
    <property type="interactions" value="1"/>
</dbReference>
<dbReference type="FunCoup" id="A6NCS4">
    <property type="interactions" value="543"/>
</dbReference>
<dbReference type="IntAct" id="A6NCS4">
    <property type="interactions" value="1"/>
</dbReference>
<dbReference type="STRING" id="9606.ENSP00000320089"/>
<dbReference type="GlyGen" id="A6NCS4">
    <property type="glycosylation" value="1 site, 1 O-linked glycan (1 site)"/>
</dbReference>
<dbReference type="iPTMnet" id="A6NCS4"/>
<dbReference type="PhosphoSitePlus" id="A6NCS4"/>
<dbReference type="BioMuta" id="NKX2-6"/>
<dbReference type="jPOST" id="A6NCS4"/>
<dbReference type="MassIVE" id="A6NCS4"/>
<dbReference type="PaxDb" id="9606-ENSP00000320089"/>
<dbReference type="PeptideAtlas" id="A6NCS4"/>
<dbReference type="ProteomicsDB" id="858"/>
<dbReference type="Antibodypedia" id="58740">
    <property type="antibodies" value="163 antibodies from 28 providers"/>
</dbReference>
<dbReference type="DNASU" id="137814"/>
<dbReference type="Ensembl" id="ENST00000325017.4">
    <property type="protein sequence ID" value="ENSP00000320089.3"/>
    <property type="gene ID" value="ENSG00000180053.8"/>
</dbReference>
<dbReference type="GeneID" id="137814"/>
<dbReference type="KEGG" id="hsa:137814"/>
<dbReference type="MANE-Select" id="ENST00000325017.4">
    <property type="protein sequence ID" value="ENSP00000320089.3"/>
    <property type="RefSeq nucleotide sequence ID" value="NM_001136271.3"/>
    <property type="RefSeq protein sequence ID" value="NP_001129743.2"/>
</dbReference>
<dbReference type="UCSC" id="uc011kzy.3">
    <property type="organism name" value="human"/>
</dbReference>
<dbReference type="AGR" id="HGNC:32940"/>
<dbReference type="CTD" id="137814"/>
<dbReference type="DisGeNET" id="137814"/>
<dbReference type="GeneCards" id="NKX2-6"/>
<dbReference type="HGNC" id="HGNC:32940">
    <property type="gene designation" value="NKX2-6"/>
</dbReference>
<dbReference type="HPA" id="ENSG00000180053">
    <property type="expression patterns" value="Tissue enhanced (salivary)"/>
</dbReference>
<dbReference type="MalaCards" id="NKX2-6"/>
<dbReference type="MIM" id="217095">
    <property type="type" value="phenotype"/>
</dbReference>
<dbReference type="MIM" id="611770">
    <property type="type" value="gene"/>
</dbReference>
<dbReference type="neXtProt" id="NX_A6NCS4"/>
<dbReference type="OpenTargets" id="ENSG00000180053"/>
<dbReference type="Orphanet" id="3384">
    <property type="disease" value="Common arterial trunk"/>
</dbReference>
<dbReference type="Orphanet" id="334">
    <property type="disease" value="Familial atrial fibrillation"/>
</dbReference>
<dbReference type="Orphanet" id="3303">
    <property type="disease" value="Tetralogy of Fallot"/>
</dbReference>
<dbReference type="VEuPathDB" id="HostDB:ENSG00000180053"/>
<dbReference type="eggNOG" id="KOG0842">
    <property type="taxonomic scope" value="Eukaryota"/>
</dbReference>
<dbReference type="GeneTree" id="ENSGT00940000162737"/>
<dbReference type="HOGENOM" id="CLU_049543_0_0_1"/>
<dbReference type="InParanoid" id="A6NCS4"/>
<dbReference type="OMA" id="SPENFQY"/>
<dbReference type="OrthoDB" id="6159439at2759"/>
<dbReference type="PAN-GO" id="A6NCS4">
    <property type="GO annotations" value="5 GO annotations based on evolutionary models"/>
</dbReference>
<dbReference type="PhylomeDB" id="A6NCS4"/>
<dbReference type="TreeFam" id="TF351204"/>
<dbReference type="PathwayCommons" id="A6NCS4"/>
<dbReference type="SignaLink" id="A6NCS4"/>
<dbReference type="BioGRID-ORCS" id="137814">
    <property type="hits" value="6 hits in 301 CRISPR screens"/>
</dbReference>
<dbReference type="GenomeRNAi" id="137814"/>
<dbReference type="Pharos" id="A6NCS4">
    <property type="development level" value="Tbio"/>
</dbReference>
<dbReference type="PRO" id="PR:A6NCS4"/>
<dbReference type="Proteomes" id="UP000005640">
    <property type="component" value="Chromosome 8"/>
</dbReference>
<dbReference type="RNAct" id="A6NCS4">
    <property type="molecule type" value="protein"/>
</dbReference>
<dbReference type="Bgee" id="ENSG00000180053">
    <property type="expression patterns" value="Expressed in right atrium auricular region and 8 other cell types or tissues"/>
</dbReference>
<dbReference type="GO" id="GO:0000785">
    <property type="term" value="C:chromatin"/>
    <property type="evidence" value="ECO:0000247"/>
    <property type="project" value="NTNU_SB"/>
</dbReference>
<dbReference type="GO" id="GO:0005634">
    <property type="term" value="C:nucleus"/>
    <property type="evidence" value="ECO:0000318"/>
    <property type="project" value="GO_Central"/>
</dbReference>
<dbReference type="GO" id="GO:0001228">
    <property type="term" value="F:DNA-binding transcription activator activity, RNA polymerase II-specific"/>
    <property type="evidence" value="ECO:0000315"/>
    <property type="project" value="BHF-UCL"/>
</dbReference>
<dbReference type="GO" id="GO:0003700">
    <property type="term" value="F:DNA-binding transcription factor activity"/>
    <property type="evidence" value="ECO:0000314"/>
    <property type="project" value="HGNC-UCL"/>
</dbReference>
<dbReference type="GO" id="GO:0000981">
    <property type="term" value="F:DNA-binding transcription factor activity, RNA polymerase II-specific"/>
    <property type="evidence" value="ECO:0000247"/>
    <property type="project" value="NTNU_SB"/>
</dbReference>
<dbReference type="GO" id="GO:0000978">
    <property type="term" value="F:RNA polymerase II cis-regulatory region sequence-specific DNA binding"/>
    <property type="evidence" value="ECO:0000315"/>
    <property type="project" value="BHF-UCL"/>
</dbReference>
<dbReference type="GO" id="GO:0055014">
    <property type="term" value="P:atrial cardiac muscle cell development"/>
    <property type="evidence" value="ECO:0000250"/>
    <property type="project" value="BHF-UCL"/>
</dbReference>
<dbReference type="GO" id="GO:0030154">
    <property type="term" value="P:cell differentiation"/>
    <property type="evidence" value="ECO:0000250"/>
    <property type="project" value="BHF-UCL"/>
</dbReference>
<dbReference type="GO" id="GO:0048565">
    <property type="term" value="P:digestive tract development"/>
    <property type="evidence" value="ECO:0000250"/>
    <property type="project" value="BHF-UCL"/>
</dbReference>
<dbReference type="GO" id="GO:0035050">
    <property type="term" value="P:embryonic heart tube development"/>
    <property type="evidence" value="ECO:0000315"/>
    <property type="project" value="HGNC-UCL"/>
</dbReference>
<dbReference type="GO" id="GO:1904019">
    <property type="term" value="P:epithelial cell apoptotic process"/>
    <property type="evidence" value="ECO:0007669"/>
    <property type="project" value="Ensembl"/>
</dbReference>
<dbReference type="GO" id="GO:0030855">
    <property type="term" value="P:epithelial cell differentiation"/>
    <property type="evidence" value="ECO:0007669"/>
    <property type="project" value="Ensembl"/>
</dbReference>
<dbReference type="GO" id="GO:0050673">
    <property type="term" value="P:epithelial cell proliferation"/>
    <property type="evidence" value="ECO:0007669"/>
    <property type="project" value="Ensembl"/>
</dbReference>
<dbReference type="GO" id="GO:0021854">
    <property type="term" value="P:hypothalamus development"/>
    <property type="evidence" value="ECO:0000250"/>
    <property type="project" value="BHF-UCL"/>
</dbReference>
<dbReference type="GO" id="GO:0043066">
    <property type="term" value="P:negative regulation of apoptotic process"/>
    <property type="evidence" value="ECO:0000250"/>
    <property type="project" value="BHF-UCL"/>
</dbReference>
<dbReference type="GO" id="GO:1904036">
    <property type="term" value="P:negative regulation of epithelial cell apoptotic process"/>
    <property type="evidence" value="ECO:0007669"/>
    <property type="project" value="Ensembl"/>
</dbReference>
<dbReference type="GO" id="GO:0060039">
    <property type="term" value="P:pericardium development"/>
    <property type="evidence" value="ECO:0000250"/>
    <property type="project" value="BHF-UCL"/>
</dbReference>
<dbReference type="GO" id="GO:0060037">
    <property type="term" value="P:pharyngeal system development"/>
    <property type="evidence" value="ECO:0000250"/>
    <property type="project" value="BHF-UCL"/>
</dbReference>
<dbReference type="GO" id="GO:0008284">
    <property type="term" value="P:positive regulation of cell population proliferation"/>
    <property type="evidence" value="ECO:0000250"/>
    <property type="project" value="BHF-UCL"/>
</dbReference>
<dbReference type="GO" id="GO:0050679">
    <property type="term" value="P:positive regulation of epithelial cell proliferation"/>
    <property type="evidence" value="ECO:0007669"/>
    <property type="project" value="Ensembl"/>
</dbReference>
<dbReference type="GO" id="GO:0045944">
    <property type="term" value="P:positive regulation of transcription by RNA polymerase II"/>
    <property type="evidence" value="ECO:0000315"/>
    <property type="project" value="HGNC-UCL"/>
</dbReference>
<dbReference type="GO" id="GO:0006357">
    <property type="term" value="P:regulation of transcription by RNA polymerase II"/>
    <property type="evidence" value="ECO:0000318"/>
    <property type="project" value="GO_Central"/>
</dbReference>
<dbReference type="GO" id="GO:0043586">
    <property type="term" value="P:tongue development"/>
    <property type="evidence" value="ECO:0000250"/>
    <property type="project" value="BHF-UCL"/>
</dbReference>
<dbReference type="GO" id="GO:0055015">
    <property type="term" value="P:ventricular cardiac muscle cell development"/>
    <property type="evidence" value="ECO:0000250"/>
    <property type="project" value="BHF-UCL"/>
</dbReference>
<dbReference type="CDD" id="cd00086">
    <property type="entry name" value="homeodomain"/>
    <property type="match status" value="1"/>
</dbReference>
<dbReference type="FunFam" id="1.10.10.60:FF:000078">
    <property type="entry name" value="NK2 homeobox 3"/>
    <property type="match status" value="1"/>
</dbReference>
<dbReference type="Gene3D" id="1.10.10.60">
    <property type="entry name" value="Homeodomain-like"/>
    <property type="match status" value="1"/>
</dbReference>
<dbReference type="InterPro" id="IPR001356">
    <property type="entry name" value="HD"/>
</dbReference>
<dbReference type="InterPro" id="IPR020479">
    <property type="entry name" value="HD_metazoa"/>
</dbReference>
<dbReference type="InterPro" id="IPR017970">
    <property type="entry name" value="Homeobox_CS"/>
</dbReference>
<dbReference type="InterPro" id="IPR050394">
    <property type="entry name" value="Homeobox_NK-like"/>
</dbReference>
<dbReference type="InterPro" id="IPR009057">
    <property type="entry name" value="Homeodomain-like_sf"/>
</dbReference>
<dbReference type="PANTHER" id="PTHR24340">
    <property type="entry name" value="HOMEOBOX PROTEIN NKX"/>
    <property type="match status" value="1"/>
</dbReference>
<dbReference type="PANTHER" id="PTHR24340:SF72">
    <property type="entry name" value="HOMEOBOX PROTEIN NKX-2.6"/>
    <property type="match status" value="1"/>
</dbReference>
<dbReference type="Pfam" id="PF00046">
    <property type="entry name" value="Homeodomain"/>
    <property type="match status" value="1"/>
</dbReference>
<dbReference type="PRINTS" id="PR00024">
    <property type="entry name" value="HOMEOBOX"/>
</dbReference>
<dbReference type="SMART" id="SM00389">
    <property type="entry name" value="HOX"/>
    <property type="match status" value="1"/>
</dbReference>
<dbReference type="SUPFAM" id="SSF46689">
    <property type="entry name" value="Homeodomain-like"/>
    <property type="match status" value="1"/>
</dbReference>
<dbReference type="PROSITE" id="PS00027">
    <property type="entry name" value="HOMEOBOX_1"/>
    <property type="match status" value="1"/>
</dbReference>
<dbReference type="PROSITE" id="PS50071">
    <property type="entry name" value="HOMEOBOX_2"/>
    <property type="match status" value="1"/>
</dbReference>
<feature type="chain" id="PRO_0000300262" description="Homeobox protein Nkx-2.6">
    <location>
        <begin position="1"/>
        <end position="301"/>
    </location>
</feature>
<feature type="DNA-binding region" description="Homeobox" evidence="2">
    <location>
        <begin position="132"/>
        <end position="191"/>
    </location>
</feature>
<feature type="region of interest" description="Disordered" evidence="3">
    <location>
        <begin position="22"/>
        <end position="135"/>
    </location>
</feature>
<feature type="sequence variant" id="VAR_063278" description="In CTHM; impairs transcriptional activation; dbSNP:rs267606914." evidence="4">
    <original>F</original>
    <variation>L</variation>
    <location>
        <position position="151"/>
    </location>
</feature>
<feature type="sequence variant" id="VAR_073164" description="In CTHM." evidence="7">
    <original>K</original>
    <variation>Q</variation>
    <location>
        <position position="152"/>
    </location>
</feature>
<feature type="sequence variant" id="VAR_073165" description="In CTHM." evidence="6">
    <original>V</original>
    <variation>A</variation>
    <location>
        <position position="176"/>
    </location>
</feature>
<feature type="sequence conflict" description="In Ref. 2; CN272646." evidence="8" ref="2">
    <original>A</original>
    <variation>G</variation>
    <location>
        <position position="199"/>
    </location>
</feature>
<comment type="function">
    <text evidence="1 4">Acts as a transcriptional activator (PubMed:15649947). In conjunction with NKX2-5, may play a role in both pharyngeal and cardiac embryonic development.</text>
</comment>
<comment type="subcellular location">
    <subcellularLocation>
        <location evidence="8">Nucleus</location>
    </subcellularLocation>
</comment>
<comment type="disease" evidence="4 5 6 7">
    <disease id="DI-01424">
        <name>Conotruncal heart malformations</name>
        <acronym>CTHM</acronym>
        <description>A group of congenital heart defects involving the outflow tracts. Examples include truncus arteriosus communis, double-outlet right ventricle and transposition of great arteries. Truncus arteriosus communis is characterized by a single outflow tract instead of a separate aorta and pulmonary artery. In transposition of the great arteries, the aorta arises from the right ventricle and the pulmonary artery from the left ventricle. In double outlet of the right ventricle, both the pulmonary artery and aorta arise from the right ventricle.</description>
        <dbReference type="MIM" id="217095"/>
    </disease>
    <text>The disease may be caused by variants affecting the gene represented in this entry.</text>
</comment>
<comment type="similarity">
    <text evidence="8">Belongs to the NK-2 homeobox family.</text>
</comment>
<evidence type="ECO:0000250" key="1">
    <source>
        <dbReference type="UniProtKB" id="P43688"/>
    </source>
</evidence>
<evidence type="ECO:0000255" key="2">
    <source>
        <dbReference type="PROSITE-ProRule" id="PRU00108"/>
    </source>
</evidence>
<evidence type="ECO:0000256" key="3">
    <source>
        <dbReference type="SAM" id="MobiDB-lite"/>
    </source>
</evidence>
<evidence type="ECO:0000269" key="4">
    <source>
    </source>
</evidence>
<evidence type="ECO:0000269" key="5">
    <source>
    </source>
</evidence>
<evidence type="ECO:0000269" key="6">
    <source>
    </source>
</evidence>
<evidence type="ECO:0000269" key="7">
    <source>
    </source>
</evidence>
<evidence type="ECO:0000305" key="8"/>
<accession>A6NCS4</accession>
<proteinExistence type="evidence at protein level"/>
<keyword id="KW-0010">Activator</keyword>
<keyword id="KW-0217">Developmental protein</keyword>
<keyword id="KW-0225">Disease variant</keyword>
<keyword id="KW-0238">DNA-binding</keyword>
<keyword id="KW-0371">Homeobox</keyword>
<keyword id="KW-0539">Nucleus</keyword>
<keyword id="KW-1185">Reference proteome</keyword>
<keyword id="KW-0804">Transcription</keyword>
<keyword id="KW-0805">Transcription regulation</keyword>
<sequence>MLLSPVTSTPFSVKDILRLERERSCPAASPHPRVRKSPENFQYLRMDAEPRGSEVHNAGGGGGDRKLDGSEPPGGPCEAVLEMDAERMGEPQPGLNAASPLGGGTRVPERGVGNSGDSVRGGRSEQPKARQRRKPRVLFSQAQVLALERRFKQQRYLSAPEREHLASALQLTSTQVKIWFQNRRYKCKRQRQDKSLELAGHPLTPRRVAVPVLVRDGKPCLGPGPGAPAFPSPYSAAVSPYSCYGGYSGAPYGAGYGTCYAGAPSGPAPHTPLASAGFGHGGQNATPQGHLAATLQGVRAW</sequence>
<protein>
    <recommendedName>
        <fullName>Homeobox protein Nkx-2.6</fullName>
    </recommendedName>
    <alternativeName>
        <fullName>Homeobox protein NK-2 homolog F</fullName>
    </alternativeName>
</protein>
<name>NKX26_HUMAN</name>